<sequence>MTKPAILALADGSIFRGEAIGADGQTVGEVVFNTAMTGYQEILTDPSYAQQIVTLTYPHIGNTGTTPEDAEANRVWAAGLIIRDLPLIASNWRSKQSLPDYLKANGTVAIAGIDTRRLTRILREKGSQNGCILAGADATEERALELARAFPGLKGMDLAKEVTTAERYEWRSSVWNLESDSHPEIPAGELPYHVVAYDYGVKLNILRMLVARGCRLTVVPAQTPASEVLALNPDGIFLSNGPGDPEPCDYAIQAIREFLDTEIPVFGICLGHQLLALASGAKTLKMGHGHHGANHPVQDLDSGVVMITSQNHGFAVDESTLPDNLRATHKSLFDGTLQGIERTDKVAFSFQGHPEASPGPHDVAPLFDRFISAMAERR</sequence>
<evidence type="ECO:0000255" key="1">
    <source>
        <dbReference type="HAMAP-Rule" id="MF_01209"/>
    </source>
</evidence>
<reference key="1">
    <citation type="journal article" date="1994" name="J. Bacteriol.">
        <title>Structure and regulation of the carAB operon in Pseudomonas aeruginosa and Pseudomonas stutzeri: no untranslated region exists.</title>
        <authorList>
            <person name="Kwon D.-H."/>
            <person name="Lu C.-D."/>
            <person name="Walthall D.A."/>
            <person name="Brown T.M."/>
            <person name="Houghton J.E."/>
            <person name="Abdelal A.T."/>
        </authorList>
    </citation>
    <scope>NUCLEOTIDE SEQUENCE [GENOMIC DNA]</scope>
    <source>
        <strain>ATCC 15692 / DSM 22644 / CIP 104116 / JCM 14847 / LMG 12228 / 1C / PRS 101 / PAO1</strain>
    </source>
</reference>
<reference key="2">
    <citation type="journal article" date="2000" name="Nature">
        <title>Complete genome sequence of Pseudomonas aeruginosa PAO1, an opportunistic pathogen.</title>
        <authorList>
            <person name="Stover C.K."/>
            <person name="Pham X.-Q.T."/>
            <person name="Erwin A.L."/>
            <person name="Mizoguchi S.D."/>
            <person name="Warrener P."/>
            <person name="Hickey M.J."/>
            <person name="Brinkman F.S.L."/>
            <person name="Hufnagle W.O."/>
            <person name="Kowalik D.J."/>
            <person name="Lagrou M."/>
            <person name="Garber R.L."/>
            <person name="Goltry L."/>
            <person name="Tolentino E."/>
            <person name="Westbrock-Wadman S."/>
            <person name="Yuan Y."/>
            <person name="Brody L.L."/>
            <person name="Coulter S.N."/>
            <person name="Folger K.R."/>
            <person name="Kas A."/>
            <person name="Larbig K."/>
            <person name="Lim R.M."/>
            <person name="Smith K.A."/>
            <person name="Spencer D.H."/>
            <person name="Wong G.K.-S."/>
            <person name="Wu Z."/>
            <person name="Paulsen I.T."/>
            <person name="Reizer J."/>
            <person name="Saier M.H. Jr."/>
            <person name="Hancock R.E.W."/>
            <person name="Lory S."/>
            <person name="Olson M.V."/>
        </authorList>
    </citation>
    <scope>NUCLEOTIDE SEQUENCE [LARGE SCALE GENOMIC DNA]</scope>
    <source>
        <strain>ATCC 15692 / DSM 22644 / CIP 104116 / JCM 14847 / LMG 12228 / 1C / PRS 101 / PAO1</strain>
    </source>
</reference>
<organism>
    <name type="scientific">Pseudomonas aeruginosa (strain ATCC 15692 / DSM 22644 / CIP 104116 / JCM 14847 / LMG 12228 / 1C / PRS 101 / PAO1)</name>
    <dbReference type="NCBI Taxonomy" id="208964"/>
    <lineage>
        <taxon>Bacteria</taxon>
        <taxon>Pseudomonadati</taxon>
        <taxon>Pseudomonadota</taxon>
        <taxon>Gammaproteobacteria</taxon>
        <taxon>Pseudomonadales</taxon>
        <taxon>Pseudomonadaceae</taxon>
        <taxon>Pseudomonas</taxon>
    </lineage>
</organism>
<dbReference type="EC" id="6.3.5.5" evidence="1"/>
<dbReference type="EMBL" id="U04992">
    <property type="protein sequence ID" value="AAA19046.1"/>
    <property type="molecule type" value="Unassigned_DNA"/>
</dbReference>
<dbReference type="EMBL" id="U81259">
    <property type="protein sequence ID" value="AAB39250.1"/>
    <property type="molecule type" value="Genomic_DNA"/>
</dbReference>
<dbReference type="EMBL" id="AE004091">
    <property type="protein sequence ID" value="AAG08144.1"/>
    <property type="molecule type" value="Genomic_DNA"/>
</dbReference>
<dbReference type="PIR" id="B55580">
    <property type="entry name" value="B55580"/>
</dbReference>
<dbReference type="RefSeq" id="NP_253446.1">
    <property type="nucleotide sequence ID" value="NC_002516.2"/>
</dbReference>
<dbReference type="RefSeq" id="WP_003095209.1">
    <property type="nucleotide sequence ID" value="NZ_QZGE01000018.1"/>
</dbReference>
<dbReference type="SMR" id="P38098"/>
<dbReference type="FunCoup" id="P38098">
    <property type="interactions" value="799"/>
</dbReference>
<dbReference type="STRING" id="208964.PA4758"/>
<dbReference type="MEROPS" id="C26.954"/>
<dbReference type="PaxDb" id="208964-PA4758"/>
<dbReference type="GeneID" id="881751"/>
<dbReference type="KEGG" id="pae:PA4758"/>
<dbReference type="PATRIC" id="fig|208964.12.peg.4984"/>
<dbReference type="PseudoCAP" id="PA4758"/>
<dbReference type="HOGENOM" id="CLU_035901_1_1_6"/>
<dbReference type="InParanoid" id="P38098"/>
<dbReference type="OrthoDB" id="9804328at2"/>
<dbReference type="PhylomeDB" id="P38098"/>
<dbReference type="BioCyc" id="PAER208964:G1FZ6-4870-MONOMER"/>
<dbReference type="UniPathway" id="UPA00068">
    <property type="reaction ID" value="UER00171"/>
</dbReference>
<dbReference type="UniPathway" id="UPA00070">
    <property type="reaction ID" value="UER00115"/>
</dbReference>
<dbReference type="Proteomes" id="UP000002438">
    <property type="component" value="Chromosome"/>
</dbReference>
<dbReference type="GO" id="GO:0005951">
    <property type="term" value="C:carbamoyl-phosphate synthase complex"/>
    <property type="evidence" value="ECO:0000318"/>
    <property type="project" value="GO_Central"/>
</dbReference>
<dbReference type="GO" id="GO:0005737">
    <property type="term" value="C:cytoplasm"/>
    <property type="evidence" value="ECO:0000318"/>
    <property type="project" value="GO_Central"/>
</dbReference>
<dbReference type="GO" id="GO:0005524">
    <property type="term" value="F:ATP binding"/>
    <property type="evidence" value="ECO:0007669"/>
    <property type="project" value="UniProtKB-UniRule"/>
</dbReference>
<dbReference type="GO" id="GO:0004088">
    <property type="term" value="F:carbamoyl-phosphate synthase (glutamine-hydrolyzing) activity"/>
    <property type="evidence" value="ECO:0007669"/>
    <property type="project" value="UniProtKB-UniRule"/>
</dbReference>
<dbReference type="GO" id="GO:0004359">
    <property type="term" value="F:glutaminase activity"/>
    <property type="evidence" value="ECO:0007669"/>
    <property type="project" value="RHEA"/>
</dbReference>
<dbReference type="GO" id="GO:0006207">
    <property type="term" value="P:'de novo' pyrimidine nucleobase biosynthetic process"/>
    <property type="evidence" value="ECO:0007669"/>
    <property type="project" value="InterPro"/>
</dbReference>
<dbReference type="GO" id="GO:0044205">
    <property type="term" value="P:'de novo' UMP biosynthetic process"/>
    <property type="evidence" value="ECO:0007669"/>
    <property type="project" value="UniProtKB-UniRule"/>
</dbReference>
<dbReference type="GO" id="GO:0071230">
    <property type="term" value="P:cellular response to amino acid stimulus"/>
    <property type="evidence" value="ECO:0000314"/>
    <property type="project" value="PseudoCAP"/>
</dbReference>
<dbReference type="GO" id="GO:0006541">
    <property type="term" value="P:glutamine metabolic process"/>
    <property type="evidence" value="ECO:0007669"/>
    <property type="project" value="InterPro"/>
</dbReference>
<dbReference type="GO" id="GO:0006526">
    <property type="term" value="P:L-arginine biosynthetic process"/>
    <property type="evidence" value="ECO:0000318"/>
    <property type="project" value="GO_Central"/>
</dbReference>
<dbReference type="CDD" id="cd01744">
    <property type="entry name" value="GATase1_CPSase"/>
    <property type="match status" value="1"/>
</dbReference>
<dbReference type="FunFam" id="3.40.50.880:FF:000011">
    <property type="entry name" value="Carbamoyl-phosphate synthase small chain"/>
    <property type="match status" value="1"/>
</dbReference>
<dbReference type="FunFam" id="3.50.30.20:FF:000001">
    <property type="entry name" value="Carbamoyl-phosphate synthase small chain"/>
    <property type="match status" value="1"/>
</dbReference>
<dbReference type="Gene3D" id="3.40.50.880">
    <property type="match status" value="1"/>
</dbReference>
<dbReference type="Gene3D" id="3.50.30.20">
    <property type="entry name" value="Carbamoyl-phosphate synthase small subunit, N-terminal domain"/>
    <property type="match status" value="1"/>
</dbReference>
<dbReference type="HAMAP" id="MF_01209">
    <property type="entry name" value="CPSase_S_chain"/>
    <property type="match status" value="1"/>
</dbReference>
<dbReference type="InterPro" id="IPR050472">
    <property type="entry name" value="Anth_synth/Amidotransfase"/>
</dbReference>
<dbReference type="InterPro" id="IPR006274">
    <property type="entry name" value="CarbamoylP_synth_ssu"/>
</dbReference>
<dbReference type="InterPro" id="IPR002474">
    <property type="entry name" value="CarbamoylP_synth_ssu_N"/>
</dbReference>
<dbReference type="InterPro" id="IPR036480">
    <property type="entry name" value="CarbP_synth_ssu_N_sf"/>
</dbReference>
<dbReference type="InterPro" id="IPR029062">
    <property type="entry name" value="Class_I_gatase-like"/>
</dbReference>
<dbReference type="InterPro" id="IPR035686">
    <property type="entry name" value="CPSase_GATase1"/>
</dbReference>
<dbReference type="InterPro" id="IPR017926">
    <property type="entry name" value="GATASE"/>
</dbReference>
<dbReference type="NCBIfam" id="TIGR01368">
    <property type="entry name" value="CPSaseIIsmall"/>
    <property type="match status" value="1"/>
</dbReference>
<dbReference type="NCBIfam" id="NF009475">
    <property type="entry name" value="PRK12838.1"/>
    <property type="match status" value="1"/>
</dbReference>
<dbReference type="PANTHER" id="PTHR43418:SF7">
    <property type="entry name" value="CARBAMOYL-PHOSPHATE SYNTHASE SMALL CHAIN"/>
    <property type="match status" value="1"/>
</dbReference>
<dbReference type="PANTHER" id="PTHR43418">
    <property type="entry name" value="MULTIFUNCTIONAL TRYPTOPHAN BIOSYNTHESIS PROTEIN-RELATED"/>
    <property type="match status" value="1"/>
</dbReference>
<dbReference type="Pfam" id="PF00988">
    <property type="entry name" value="CPSase_sm_chain"/>
    <property type="match status" value="1"/>
</dbReference>
<dbReference type="Pfam" id="PF00117">
    <property type="entry name" value="GATase"/>
    <property type="match status" value="1"/>
</dbReference>
<dbReference type="PRINTS" id="PR00097">
    <property type="entry name" value="ANTSNTHASEII"/>
</dbReference>
<dbReference type="PRINTS" id="PR00099">
    <property type="entry name" value="CPSGATASE"/>
</dbReference>
<dbReference type="PRINTS" id="PR00096">
    <property type="entry name" value="GATASE"/>
</dbReference>
<dbReference type="SMART" id="SM01097">
    <property type="entry name" value="CPSase_sm_chain"/>
    <property type="match status" value="1"/>
</dbReference>
<dbReference type="SUPFAM" id="SSF52021">
    <property type="entry name" value="Carbamoyl phosphate synthetase, small subunit N-terminal domain"/>
    <property type="match status" value="1"/>
</dbReference>
<dbReference type="SUPFAM" id="SSF52317">
    <property type="entry name" value="Class I glutamine amidotransferase-like"/>
    <property type="match status" value="1"/>
</dbReference>
<dbReference type="PROSITE" id="PS51273">
    <property type="entry name" value="GATASE_TYPE_1"/>
    <property type="match status" value="1"/>
</dbReference>
<proteinExistence type="inferred from homology"/>
<feature type="chain" id="PRO_0000112304" description="Carbamoyl phosphate synthase small chain">
    <location>
        <begin position="1"/>
        <end position="378"/>
    </location>
</feature>
<feature type="domain" description="Glutamine amidotransferase type-1" evidence="1">
    <location>
        <begin position="193"/>
        <end position="378"/>
    </location>
</feature>
<feature type="region of interest" description="CPSase" evidence="1">
    <location>
        <begin position="1"/>
        <end position="189"/>
    </location>
</feature>
<feature type="active site" description="Nucleophile" evidence="1">
    <location>
        <position position="269"/>
    </location>
</feature>
<feature type="active site" evidence="1">
    <location>
        <position position="353"/>
    </location>
</feature>
<feature type="active site" evidence="1">
    <location>
        <position position="355"/>
    </location>
</feature>
<feature type="binding site" evidence="1">
    <location>
        <position position="47"/>
    </location>
    <ligand>
        <name>L-glutamine</name>
        <dbReference type="ChEBI" id="CHEBI:58359"/>
    </ligand>
</feature>
<feature type="binding site" evidence="1">
    <location>
        <position position="241"/>
    </location>
    <ligand>
        <name>L-glutamine</name>
        <dbReference type="ChEBI" id="CHEBI:58359"/>
    </ligand>
</feature>
<feature type="binding site" evidence="1">
    <location>
        <position position="243"/>
    </location>
    <ligand>
        <name>L-glutamine</name>
        <dbReference type="ChEBI" id="CHEBI:58359"/>
    </ligand>
</feature>
<feature type="binding site" evidence="1">
    <location>
        <position position="270"/>
    </location>
    <ligand>
        <name>L-glutamine</name>
        <dbReference type="ChEBI" id="CHEBI:58359"/>
    </ligand>
</feature>
<feature type="binding site" evidence="1">
    <location>
        <position position="273"/>
    </location>
    <ligand>
        <name>L-glutamine</name>
        <dbReference type="ChEBI" id="CHEBI:58359"/>
    </ligand>
</feature>
<feature type="binding site" evidence="1">
    <location>
        <position position="311"/>
    </location>
    <ligand>
        <name>L-glutamine</name>
        <dbReference type="ChEBI" id="CHEBI:58359"/>
    </ligand>
</feature>
<feature type="binding site" evidence="1">
    <location>
        <position position="313"/>
    </location>
    <ligand>
        <name>L-glutamine</name>
        <dbReference type="ChEBI" id="CHEBI:58359"/>
    </ligand>
</feature>
<feature type="binding site" evidence="1">
    <location>
        <position position="314"/>
    </location>
    <ligand>
        <name>L-glutamine</name>
        <dbReference type="ChEBI" id="CHEBI:58359"/>
    </ligand>
</feature>
<accession>P38098</accession>
<protein>
    <recommendedName>
        <fullName evidence="1">Carbamoyl phosphate synthase small chain</fullName>
        <ecNumber evidence="1">6.3.5.5</ecNumber>
    </recommendedName>
    <alternativeName>
        <fullName evidence="1">Carbamoyl phosphate synthetase glutamine chain</fullName>
    </alternativeName>
</protein>
<keyword id="KW-0028">Amino-acid biosynthesis</keyword>
<keyword id="KW-0055">Arginine biosynthesis</keyword>
<keyword id="KW-0067">ATP-binding</keyword>
<keyword id="KW-0315">Glutamine amidotransferase</keyword>
<keyword id="KW-0436">Ligase</keyword>
<keyword id="KW-0547">Nucleotide-binding</keyword>
<keyword id="KW-0665">Pyrimidine biosynthesis</keyword>
<keyword id="KW-1185">Reference proteome</keyword>
<gene>
    <name evidence="1" type="primary">carA</name>
    <name type="ordered locus">PA4758</name>
</gene>
<comment type="function">
    <text evidence="1">Small subunit of the glutamine-dependent carbamoyl phosphate synthetase (CPSase). CPSase catalyzes the formation of carbamoyl phosphate from the ammonia moiety of glutamine, carbonate, and phosphate donated by ATP, constituting the first step of 2 biosynthetic pathways, one leading to arginine and/or urea and the other to pyrimidine nucleotides. The small subunit (glutamine amidotransferase) binds and cleaves glutamine to supply the large subunit with the substrate ammonia.</text>
</comment>
<comment type="catalytic activity">
    <reaction evidence="1">
        <text>hydrogencarbonate + L-glutamine + 2 ATP + H2O = carbamoyl phosphate + L-glutamate + 2 ADP + phosphate + 2 H(+)</text>
        <dbReference type="Rhea" id="RHEA:18633"/>
        <dbReference type="ChEBI" id="CHEBI:15377"/>
        <dbReference type="ChEBI" id="CHEBI:15378"/>
        <dbReference type="ChEBI" id="CHEBI:17544"/>
        <dbReference type="ChEBI" id="CHEBI:29985"/>
        <dbReference type="ChEBI" id="CHEBI:30616"/>
        <dbReference type="ChEBI" id="CHEBI:43474"/>
        <dbReference type="ChEBI" id="CHEBI:58228"/>
        <dbReference type="ChEBI" id="CHEBI:58359"/>
        <dbReference type="ChEBI" id="CHEBI:456216"/>
        <dbReference type="EC" id="6.3.5.5"/>
    </reaction>
</comment>
<comment type="catalytic activity">
    <molecule>Carbamoyl phosphate synthase small chain</molecule>
    <reaction evidence="1">
        <text>L-glutamine + H2O = L-glutamate + NH4(+)</text>
        <dbReference type="Rhea" id="RHEA:15889"/>
        <dbReference type="ChEBI" id="CHEBI:15377"/>
        <dbReference type="ChEBI" id="CHEBI:28938"/>
        <dbReference type="ChEBI" id="CHEBI:29985"/>
        <dbReference type="ChEBI" id="CHEBI:58359"/>
    </reaction>
</comment>
<comment type="pathway">
    <text evidence="1">Amino-acid biosynthesis; L-arginine biosynthesis; carbamoyl phosphate from bicarbonate: step 1/1.</text>
</comment>
<comment type="pathway">
    <text evidence="1">Pyrimidine metabolism; UMP biosynthesis via de novo pathway; (S)-dihydroorotate from bicarbonate: step 1/3.</text>
</comment>
<comment type="subunit">
    <text evidence="1">Composed of two chains; the small (or glutamine) chain promotes the hydrolysis of glutamine to ammonia, which is used by the large (or ammonia) chain to synthesize carbamoyl phosphate. Tetramer of heterodimers (alpha,beta)4.</text>
</comment>
<comment type="similarity">
    <text evidence="1">Belongs to the CarA family.</text>
</comment>
<name>CARA_PSEAE</name>